<dbReference type="EC" id="4.1.1.23" evidence="1"/>
<dbReference type="EMBL" id="CP000253">
    <property type="protein sequence ID" value="ABD30278.1"/>
    <property type="molecule type" value="Genomic_DNA"/>
</dbReference>
<dbReference type="RefSeq" id="WP_000654061.1">
    <property type="nucleotide sequence ID" value="NZ_LS483365.1"/>
</dbReference>
<dbReference type="RefSeq" id="YP_499710.1">
    <property type="nucleotide sequence ID" value="NC_007795.1"/>
</dbReference>
<dbReference type="SMR" id="Q2FZ71"/>
<dbReference type="STRING" id="93061.SAOUHSC_01171"/>
<dbReference type="PaxDb" id="1280-SAXN108_1202"/>
<dbReference type="GeneID" id="3920922"/>
<dbReference type="KEGG" id="sao:SAOUHSC_01171"/>
<dbReference type="PATRIC" id="fig|93061.5.peg.1073"/>
<dbReference type="eggNOG" id="COG0284">
    <property type="taxonomic scope" value="Bacteria"/>
</dbReference>
<dbReference type="HOGENOM" id="CLU_067069_1_1_9"/>
<dbReference type="OrthoDB" id="9806203at2"/>
<dbReference type="UniPathway" id="UPA00070">
    <property type="reaction ID" value="UER00120"/>
</dbReference>
<dbReference type="PRO" id="PR:Q2FZ71"/>
<dbReference type="Proteomes" id="UP000008816">
    <property type="component" value="Chromosome"/>
</dbReference>
<dbReference type="GO" id="GO:0005829">
    <property type="term" value="C:cytosol"/>
    <property type="evidence" value="ECO:0000318"/>
    <property type="project" value="GO_Central"/>
</dbReference>
<dbReference type="GO" id="GO:0004590">
    <property type="term" value="F:orotidine-5'-phosphate decarboxylase activity"/>
    <property type="evidence" value="ECO:0000318"/>
    <property type="project" value="GO_Central"/>
</dbReference>
<dbReference type="GO" id="GO:0006207">
    <property type="term" value="P:'de novo' pyrimidine nucleobase biosynthetic process"/>
    <property type="evidence" value="ECO:0000318"/>
    <property type="project" value="GO_Central"/>
</dbReference>
<dbReference type="GO" id="GO:0044205">
    <property type="term" value="P:'de novo' UMP biosynthetic process"/>
    <property type="evidence" value="ECO:0007669"/>
    <property type="project" value="UniProtKB-UniRule"/>
</dbReference>
<dbReference type="CDD" id="cd04725">
    <property type="entry name" value="OMP_decarboxylase_like"/>
    <property type="match status" value="1"/>
</dbReference>
<dbReference type="FunFam" id="3.20.20.70:FF:000015">
    <property type="entry name" value="Orotidine 5'-phosphate decarboxylase"/>
    <property type="match status" value="1"/>
</dbReference>
<dbReference type="Gene3D" id="3.20.20.70">
    <property type="entry name" value="Aldolase class I"/>
    <property type="match status" value="1"/>
</dbReference>
<dbReference type="HAMAP" id="MF_01200_B">
    <property type="entry name" value="OMPdecase_type1_B"/>
    <property type="match status" value="1"/>
</dbReference>
<dbReference type="InterPro" id="IPR013785">
    <property type="entry name" value="Aldolase_TIM"/>
</dbReference>
<dbReference type="InterPro" id="IPR014732">
    <property type="entry name" value="OMPdecase"/>
</dbReference>
<dbReference type="InterPro" id="IPR018089">
    <property type="entry name" value="OMPdecase_AS"/>
</dbReference>
<dbReference type="InterPro" id="IPR047596">
    <property type="entry name" value="OMPdecase_bac"/>
</dbReference>
<dbReference type="InterPro" id="IPR001754">
    <property type="entry name" value="OMPdeCOase_dom"/>
</dbReference>
<dbReference type="InterPro" id="IPR011060">
    <property type="entry name" value="RibuloseP-bd_barrel"/>
</dbReference>
<dbReference type="NCBIfam" id="NF001273">
    <property type="entry name" value="PRK00230.1"/>
    <property type="match status" value="1"/>
</dbReference>
<dbReference type="NCBIfam" id="TIGR01740">
    <property type="entry name" value="pyrF"/>
    <property type="match status" value="1"/>
</dbReference>
<dbReference type="PANTHER" id="PTHR32119">
    <property type="entry name" value="OROTIDINE 5'-PHOSPHATE DECARBOXYLASE"/>
    <property type="match status" value="1"/>
</dbReference>
<dbReference type="PANTHER" id="PTHR32119:SF2">
    <property type="entry name" value="OROTIDINE 5'-PHOSPHATE DECARBOXYLASE"/>
    <property type="match status" value="1"/>
</dbReference>
<dbReference type="Pfam" id="PF00215">
    <property type="entry name" value="OMPdecase"/>
    <property type="match status" value="1"/>
</dbReference>
<dbReference type="SMART" id="SM00934">
    <property type="entry name" value="OMPdecase"/>
    <property type="match status" value="1"/>
</dbReference>
<dbReference type="SUPFAM" id="SSF51366">
    <property type="entry name" value="Ribulose-phoshate binding barrel"/>
    <property type="match status" value="1"/>
</dbReference>
<dbReference type="PROSITE" id="PS00156">
    <property type="entry name" value="OMPDECASE"/>
    <property type="match status" value="1"/>
</dbReference>
<proteinExistence type="inferred from homology"/>
<protein>
    <recommendedName>
        <fullName evidence="1">Orotidine 5'-phosphate decarboxylase</fullName>
        <ecNumber evidence="1">4.1.1.23</ecNumber>
    </recommendedName>
    <alternativeName>
        <fullName evidence="1">OMP decarboxylase</fullName>
        <shortName evidence="1">OMPDCase</shortName>
        <shortName evidence="1">OMPdecase</shortName>
    </alternativeName>
</protein>
<keyword id="KW-0210">Decarboxylase</keyword>
<keyword id="KW-0456">Lyase</keyword>
<keyword id="KW-0665">Pyrimidine biosynthesis</keyword>
<keyword id="KW-1185">Reference proteome</keyword>
<comment type="function">
    <text evidence="1">Catalyzes the decarboxylation of orotidine 5'-monophosphate (OMP) to uridine 5'-monophosphate (UMP).</text>
</comment>
<comment type="catalytic activity">
    <reaction evidence="1">
        <text>orotidine 5'-phosphate + H(+) = UMP + CO2</text>
        <dbReference type="Rhea" id="RHEA:11596"/>
        <dbReference type="ChEBI" id="CHEBI:15378"/>
        <dbReference type="ChEBI" id="CHEBI:16526"/>
        <dbReference type="ChEBI" id="CHEBI:57538"/>
        <dbReference type="ChEBI" id="CHEBI:57865"/>
        <dbReference type="EC" id="4.1.1.23"/>
    </reaction>
</comment>
<comment type="pathway">
    <text evidence="1">Pyrimidine metabolism; UMP biosynthesis via de novo pathway; UMP from orotate: step 2/2.</text>
</comment>
<comment type="subunit">
    <text evidence="1">Homodimer.</text>
</comment>
<comment type="similarity">
    <text evidence="1">Belongs to the OMP decarboxylase family. Type 1 subfamily.</text>
</comment>
<reference key="1">
    <citation type="book" date="2006" name="Gram positive pathogens, 2nd edition">
        <title>The Staphylococcus aureus NCTC 8325 genome.</title>
        <editorList>
            <person name="Fischetti V."/>
            <person name="Novick R."/>
            <person name="Ferretti J."/>
            <person name="Portnoy D."/>
            <person name="Rood J."/>
        </editorList>
        <authorList>
            <person name="Gillaspy A.F."/>
            <person name="Worrell V."/>
            <person name="Orvis J."/>
            <person name="Roe B.A."/>
            <person name="Dyer D.W."/>
            <person name="Iandolo J.J."/>
        </authorList>
    </citation>
    <scope>NUCLEOTIDE SEQUENCE [LARGE SCALE GENOMIC DNA]</scope>
    <source>
        <strain>NCTC 8325 / PS 47</strain>
    </source>
</reference>
<organism>
    <name type="scientific">Staphylococcus aureus (strain NCTC 8325 / PS 47)</name>
    <dbReference type="NCBI Taxonomy" id="93061"/>
    <lineage>
        <taxon>Bacteria</taxon>
        <taxon>Bacillati</taxon>
        <taxon>Bacillota</taxon>
        <taxon>Bacilli</taxon>
        <taxon>Bacillales</taxon>
        <taxon>Staphylococcaceae</taxon>
        <taxon>Staphylococcus</taxon>
    </lineage>
</organism>
<gene>
    <name evidence="1" type="primary">pyrF</name>
    <name type="ordered locus">SAOUHSC_01171</name>
</gene>
<accession>Q2FZ71</accession>
<sequence length="230" mass="25596">MKDLPIIALDFESKEKVNQFLDLFDESLFVKVGMELFYQEGPQLINEIKERGHDVFLDLKLHDIPNTVGKAMEGLAKLNVDLVNVHAAGGVKMMSEAIKGLRKHNQDTKIIAVTQLTSTTEDMLRHEQNIQTSIEEAVLNYAKLANAAGLDGVVCSPLESRMLTEKLGTSFLKVTPGIRPKGASQNDQHRITTPEEARQLGSTHIVVGRPITQSDNPVESYHKIKESWLV</sequence>
<evidence type="ECO:0000255" key="1">
    <source>
        <dbReference type="HAMAP-Rule" id="MF_01200"/>
    </source>
</evidence>
<feature type="chain" id="PRO_1000065944" description="Orotidine 5'-phosphate decarboxylase">
    <location>
        <begin position="1"/>
        <end position="230"/>
    </location>
</feature>
<feature type="active site" description="Proton donor" evidence="1">
    <location>
        <position position="60"/>
    </location>
</feature>
<feature type="binding site" evidence="1">
    <location>
        <position position="10"/>
    </location>
    <ligand>
        <name>substrate</name>
    </ligand>
</feature>
<feature type="binding site" evidence="1">
    <location>
        <position position="31"/>
    </location>
    <ligand>
        <name>substrate</name>
    </ligand>
</feature>
<feature type="binding site" evidence="1">
    <location>
        <begin position="58"/>
        <end position="67"/>
    </location>
    <ligand>
        <name>substrate</name>
    </ligand>
</feature>
<feature type="binding site" evidence="1">
    <location>
        <position position="117"/>
    </location>
    <ligand>
        <name>substrate</name>
    </ligand>
</feature>
<feature type="binding site" evidence="1">
    <location>
        <position position="179"/>
    </location>
    <ligand>
        <name>substrate</name>
    </ligand>
</feature>
<feature type="binding site" evidence="1">
    <location>
        <position position="188"/>
    </location>
    <ligand>
        <name>substrate</name>
    </ligand>
</feature>
<feature type="binding site" evidence="1">
    <location>
        <position position="208"/>
    </location>
    <ligand>
        <name>substrate</name>
    </ligand>
</feature>
<feature type="binding site" evidence="1">
    <location>
        <position position="209"/>
    </location>
    <ligand>
        <name>substrate</name>
    </ligand>
</feature>
<name>PYRF_STAA8</name>